<keyword id="KW-0963">Cytoplasm</keyword>
<keyword id="KW-0378">Hydrolase</keyword>
<keyword id="KW-0479">Metal-binding</keyword>
<keyword id="KW-0547">Nucleotide-binding</keyword>
<dbReference type="EC" id="3.1.3.89" evidence="1"/>
<dbReference type="EMBL" id="CP000647">
    <property type="protein sequence ID" value="ABR78098.1"/>
    <property type="molecule type" value="Genomic_DNA"/>
</dbReference>
<dbReference type="SMR" id="A6TBX7"/>
<dbReference type="STRING" id="272620.KPN_02681"/>
<dbReference type="PaxDb" id="272620-KPN_02681"/>
<dbReference type="EnsemblBacteria" id="ABR78098">
    <property type="protein sequence ID" value="ABR78098"/>
    <property type="gene ID" value="KPN_02681"/>
</dbReference>
<dbReference type="KEGG" id="kpn:KPN_02681"/>
<dbReference type="HOGENOM" id="CLU_084784_0_0_6"/>
<dbReference type="Proteomes" id="UP000000265">
    <property type="component" value="Chromosome"/>
</dbReference>
<dbReference type="GO" id="GO:0005737">
    <property type="term" value="C:cytoplasm"/>
    <property type="evidence" value="ECO:0007669"/>
    <property type="project" value="UniProtKB-SubCell"/>
</dbReference>
<dbReference type="GO" id="GO:0002953">
    <property type="term" value="F:5'-deoxynucleotidase activity"/>
    <property type="evidence" value="ECO:0007669"/>
    <property type="project" value="UniProtKB-EC"/>
</dbReference>
<dbReference type="GO" id="GO:0046872">
    <property type="term" value="F:metal ion binding"/>
    <property type="evidence" value="ECO:0007669"/>
    <property type="project" value="UniProtKB-KW"/>
</dbReference>
<dbReference type="GO" id="GO:0000166">
    <property type="term" value="F:nucleotide binding"/>
    <property type="evidence" value="ECO:0007669"/>
    <property type="project" value="UniProtKB-KW"/>
</dbReference>
<dbReference type="CDD" id="cd00077">
    <property type="entry name" value="HDc"/>
    <property type="match status" value="1"/>
</dbReference>
<dbReference type="FunFam" id="1.10.3210.10:FF:000002">
    <property type="entry name" value="Nucleotidase YfbR"/>
    <property type="match status" value="1"/>
</dbReference>
<dbReference type="Gene3D" id="1.10.3210.10">
    <property type="entry name" value="Hypothetical protein af1432"/>
    <property type="match status" value="1"/>
</dbReference>
<dbReference type="HAMAP" id="MF_01100">
    <property type="entry name" value="5DNU"/>
    <property type="match status" value="1"/>
</dbReference>
<dbReference type="InterPro" id="IPR003607">
    <property type="entry name" value="HD/PDEase_dom"/>
</dbReference>
<dbReference type="InterPro" id="IPR006674">
    <property type="entry name" value="HD_domain"/>
</dbReference>
<dbReference type="InterPro" id="IPR022971">
    <property type="entry name" value="YfbR"/>
</dbReference>
<dbReference type="InterPro" id="IPR039356">
    <property type="entry name" value="YfbR/HDDC2"/>
</dbReference>
<dbReference type="NCBIfam" id="NF003009">
    <property type="entry name" value="PRK03826.1"/>
    <property type="match status" value="1"/>
</dbReference>
<dbReference type="PANTHER" id="PTHR11845">
    <property type="entry name" value="5'-DEOXYNUCLEOTIDASE HDDC2"/>
    <property type="match status" value="1"/>
</dbReference>
<dbReference type="PANTHER" id="PTHR11845:SF13">
    <property type="entry name" value="5'-DEOXYNUCLEOTIDASE HDDC2"/>
    <property type="match status" value="1"/>
</dbReference>
<dbReference type="Pfam" id="PF12917">
    <property type="entry name" value="YfbR-like"/>
    <property type="match status" value="1"/>
</dbReference>
<dbReference type="SMART" id="SM00471">
    <property type="entry name" value="HDc"/>
    <property type="match status" value="1"/>
</dbReference>
<dbReference type="SUPFAM" id="SSF109604">
    <property type="entry name" value="HD-domain/PDEase-like"/>
    <property type="match status" value="1"/>
</dbReference>
<dbReference type="PROSITE" id="PS51831">
    <property type="entry name" value="HD"/>
    <property type="match status" value="1"/>
</dbReference>
<reference key="1">
    <citation type="submission" date="2006-09" db="EMBL/GenBank/DDBJ databases">
        <authorList>
            <consortium name="The Klebsiella pneumonia Genome Sequencing Project"/>
            <person name="McClelland M."/>
            <person name="Sanderson E.K."/>
            <person name="Spieth J."/>
            <person name="Clifton W.S."/>
            <person name="Latreille P."/>
            <person name="Sabo A."/>
            <person name="Pepin K."/>
            <person name="Bhonagiri V."/>
            <person name="Porwollik S."/>
            <person name="Ali J."/>
            <person name="Wilson R.K."/>
        </authorList>
    </citation>
    <scope>NUCLEOTIDE SEQUENCE [LARGE SCALE GENOMIC DNA]</scope>
    <source>
        <strain>ATCC 700721 / MGH 78578</strain>
    </source>
</reference>
<organism>
    <name type="scientific">Klebsiella pneumoniae subsp. pneumoniae (strain ATCC 700721 / MGH 78578)</name>
    <dbReference type="NCBI Taxonomy" id="272620"/>
    <lineage>
        <taxon>Bacteria</taxon>
        <taxon>Pseudomonadati</taxon>
        <taxon>Pseudomonadota</taxon>
        <taxon>Gammaproteobacteria</taxon>
        <taxon>Enterobacterales</taxon>
        <taxon>Enterobacteriaceae</taxon>
        <taxon>Klebsiella/Raoultella group</taxon>
        <taxon>Klebsiella</taxon>
        <taxon>Klebsiella pneumoniae complex</taxon>
    </lineage>
</organism>
<proteinExistence type="inferred from homology"/>
<comment type="function">
    <text evidence="1">Catalyzes the strictly specific dephosphorylation of 2'-deoxyribonucleoside 5'-monophosphates.</text>
</comment>
<comment type="catalytic activity">
    <reaction evidence="1">
        <text>a 2'-deoxyribonucleoside 5'-phosphate + H2O = a 2'-deoxyribonucleoside + phosphate</text>
        <dbReference type="Rhea" id="RHEA:36167"/>
        <dbReference type="ChEBI" id="CHEBI:15377"/>
        <dbReference type="ChEBI" id="CHEBI:18274"/>
        <dbReference type="ChEBI" id="CHEBI:43474"/>
        <dbReference type="ChEBI" id="CHEBI:65317"/>
        <dbReference type="EC" id="3.1.3.89"/>
    </reaction>
</comment>
<comment type="cofactor">
    <cofactor evidence="1">
        <name>a divalent metal cation</name>
        <dbReference type="ChEBI" id="CHEBI:60240"/>
    </cofactor>
</comment>
<comment type="subunit">
    <text evidence="1">Homodimer.</text>
</comment>
<comment type="subcellular location">
    <subcellularLocation>
        <location evidence="1">Cytoplasm</location>
    </subcellularLocation>
</comment>
<comment type="similarity">
    <text evidence="1">Belongs to the 5DNU family.</text>
</comment>
<evidence type="ECO:0000255" key="1">
    <source>
        <dbReference type="HAMAP-Rule" id="MF_01100"/>
    </source>
</evidence>
<evidence type="ECO:0000255" key="2">
    <source>
        <dbReference type="PROSITE-ProRule" id="PRU01175"/>
    </source>
</evidence>
<gene>
    <name type="ordered locus">KPN78578_26370</name>
    <name type="ORF">KPN_02681</name>
</gene>
<feature type="chain" id="PRO_1000064955" description="5'-deoxynucleotidase KPN78578_26370">
    <location>
        <begin position="1"/>
        <end position="199"/>
    </location>
</feature>
<feature type="domain" description="HD" evidence="2">
    <location>
        <begin position="30"/>
        <end position="142"/>
    </location>
</feature>
<feature type="binding site" evidence="1">
    <location>
        <begin position="18"/>
        <end position="19"/>
    </location>
    <ligand>
        <name>substrate</name>
    </ligand>
</feature>
<feature type="binding site" evidence="1">
    <location>
        <position position="33"/>
    </location>
    <ligand>
        <name>a divalent metal cation</name>
        <dbReference type="ChEBI" id="CHEBI:60240"/>
    </ligand>
</feature>
<feature type="binding site" evidence="1">
    <location>
        <position position="33"/>
    </location>
    <ligand>
        <name>substrate</name>
    </ligand>
</feature>
<feature type="binding site" evidence="1">
    <location>
        <position position="68"/>
    </location>
    <ligand>
        <name>a divalent metal cation</name>
        <dbReference type="ChEBI" id="CHEBI:60240"/>
    </ligand>
</feature>
<feature type="binding site" evidence="1">
    <location>
        <position position="69"/>
    </location>
    <ligand>
        <name>a divalent metal cation</name>
        <dbReference type="ChEBI" id="CHEBI:60240"/>
    </ligand>
</feature>
<feature type="binding site" evidence="1">
    <location>
        <position position="69"/>
    </location>
    <ligand>
        <name>substrate</name>
    </ligand>
</feature>
<feature type="binding site" evidence="1">
    <location>
        <begin position="77"/>
        <end position="80"/>
    </location>
    <ligand>
        <name>substrate</name>
    </ligand>
</feature>
<feature type="binding site" evidence="1">
    <location>
        <position position="137"/>
    </location>
    <ligand>
        <name>a divalent metal cation</name>
        <dbReference type="ChEBI" id="CHEBI:60240"/>
    </ligand>
</feature>
<feature type="binding site" evidence="1">
    <location>
        <position position="137"/>
    </location>
    <ligand>
        <name>substrate</name>
    </ligand>
</feature>
<feature type="site" description="Appears to be important in orienting the phosphate for catalysis" evidence="1">
    <location>
        <position position="18"/>
    </location>
</feature>
<accession>A6TBX7</accession>
<sequence length="199" mass="22711">MSQSHFFAHLSRLKLINRWPLMRNVRTENVSEHSLQVAMVAHALAAIKNRKFGGQVNAERIALLAMYHDASEVLTGDLPTPVKYFNSQIAQEYKAIEKIAQQKLVDMVPDELRDIFEPLIDEHHYSEEEQSIVKQADALCAYLKCLEELSAGNNEFLLAKGRLEKTLASRRSAEMDYFMQVFVPSFQLSLDEISQDSPL</sequence>
<protein>
    <recommendedName>
        <fullName evidence="1">5'-deoxynucleotidase KPN78578_26370</fullName>
        <ecNumber evidence="1">3.1.3.89</ecNumber>
    </recommendedName>
    <alternativeName>
        <fullName evidence="1">5'-deoxyribonucleotidase</fullName>
    </alternativeName>
    <alternativeName>
        <fullName evidence="1">Nucleoside 5'-monophosphate phosphohydrolase</fullName>
    </alternativeName>
</protein>
<name>5DNU_KLEP7</name>